<evidence type="ECO:0000250" key="1"/>
<evidence type="ECO:0000250" key="2">
    <source>
        <dbReference type="UniProtKB" id="P34446"/>
    </source>
</evidence>
<evidence type="ECO:0000250" key="3">
    <source>
        <dbReference type="UniProtKB" id="P53708"/>
    </source>
</evidence>
<evidence type="ECO:0000250" key="4">
    <source>
        <dbReference type="UniProtKB" id="Q3UV74"/>
    </source>
</evidence>
<evidence type="ECO:0000255" key="5"/>
<evidence type="ECO:0000255" key="6">
    <source>
        <dbReference type="PROSITE-ProRule" id="PRU00803"/>
    </source>
</evidence>
<evidence type="ECO:0000256" key="7">
    <source>
        <dbReference type="SAM" id="MobiDB-lite"/>
    </source>
</evidence>
<evidence type="ECO:0000312" key="8">
    <source>
        <dbReference type="EMBL" id="CAP27117.2"/>
    </source>
</evidence>
<comment type="function">
    <text evidence="2 3">Required for muscle development probably through the regulation of the actin-myosin cytoskeleton. During the formation of neuromuscular junctions at the larval stage, negatively regulates membrane protrusion from body wall muscles, probably through lamins such as epi-1, lam-2 and unc-52. Required for distal tip cell migration and dorsal pathfinding. Required for egg-laying. May play a role in cell motility and cell-cell interactions.</text>
</comment>
<comment type="subunit">
    <text evidence="1">Heterodimer of an alpha and a beta subunit. Alpha pat-2 associates with beta pat-3 (By similarity).</text>
</comment>
<comment type="subcellular location">
    <subcellularLocation>
        <location evidence="4">Membrane</location>
        <topology evidence="4">Single-pass type I membrane protein</topology>
    </subcellularLocation>
</comment>
<comment type="similarity">
    <text evidence="5">Belongs to the integrin alpha chain family.</text>
</comment>
<reference evidence="8" key="1">
    <citation type="journal article" date="2003" name="PLoS Biol.">
        <title>The genome sequence of Caenorhabditis briggsae: a platform for comparative genomics.</title>
        <authorList>
            <person name="Stein L.D."/>
            <person name="Bao Z."/>
            <person name="Blasiar D."/>
            <person name="Blumenthal T."/>
            <person name="Brent M.R."/>
            <person name="Chen N."/>
            <person name="Chinwalla A."/>
            <person name="Clarke L."/>
            <person name="Clee C."/>
            <person name="Coghlan A."/>
            <person name="Coulson A."/>
            <person name="D'Eustachio P."/>
            <person name="Fitch D.H.A."/>
            <person name="Fulton L.A."/>
            <person name="Fulton R.E."/>
            <person name="Griffiths-Jones S."/>
            <person name="Harris T.W."/>
            <person name="Hillier L.W."/>
            <person name="Kamath R."/>
            <person name="Kuwabara P.E."/>
            <person name="Mardis E.R."/>
            <person name="Marra M.A."/>
            <person name="Miner T.L."/>
            <person name="Minx P."/>
            <person name="Mullikin J.C."/>
            <person name="Plumb R.W."/>
            <person name="Rogers J."/>
            <person name="Schein J.E."/>
            <person name="Sohrmann M."/>
            <person name="Spieth J."/>
            <person name="Stajich J.E."/>
            <person name="Wei C."/>
            <person name="Willey D."/>
            <person name="Wilson R.K."/>
            <person name="Durbin R.M."/>
            <person name="Waterston R.H."/>
        </authorList>
    </citation>
    <scope>NUCLEOTIDE SEQUENCE [LARGE SCALE GENOMIC DNA]</scope>
    <source>
        <strain evidence="8">AF16</strain>
    </source>
</reference>
<accession>A8X3A7</accession>
<name>PAT2_CAEBR</name>
<sequence length="1224" mass="135935">MREGSFPRRTRLLCLLAAVVLISTVTSFNIDTKNVVLHHMANNYFGYSLDFYNEQKGMPVLVVGAPEAETTNPNLSGIRRPGAVYACSVNRPTCREVHVDKMKGNLKKLNGSHLVPIEDKAYQFFGATVKSNDKHDKLLMCAPKYKYFYSKFEVIEPVGTCFYAENGFEKTEEFSSCKQEPARHGRHRLGYGQCGFSGAIPGKKNQDRVFLGAPGVWYWQGAIFSQNTKNQTDRPNTEYGSKEYDHDMMGYATATGDFDGDGIDDIVAGVPRGNDLHGKLVLYTSKLKMMINLTDEVSTQHGQYCGGALAVADVNKDGRDDIIMGCPFYTDYGSVKDAKTQERKPQYDVGKVIVFLQTAPGVFGKQLAVVGDDQWGRFGHSLAAAGDLNLDGYNDVIVGAPYAGKNKQGAVYVIHGSKDGVREKPTQKIEASQIGHGTARAFGFAVAGGVDVDGNGMPDIAVGAWKSGNAAVLLTKPVVTVTGATEPESALINVEEKNCDVDGKLGKQACRHINTCFKYEGKGDTPNDLEFDLRFNLDDHSPEPRAYFLQKDVKSDRSIKVASGSKTRDHPSSIEQRVRLEKGRQKCFRHRFFASSTMKDKLSPIHWSVNYTYVESKSGKLRGDKLEPAIDTTVPLSFQNKINIANNCGKDDLCVPDLKVTAVADREKFLLGTQDNTMLINVTVQNGGEDSYETKLYFDVPQGFEYGGIESVGADGSAPACSPTSDEPDSDGKWTFACDLGNPLPANKVVSSVVRVTASSDKPPLAPISINAHVNSSNDEEAHTIADNKVTFTIPVDFKNQLSLNGRSNPEQVDFSMTNKTRSDVFDDNEIGPVVSHLYQISNRGPSEIDAATLDIFWPSFSTEGGHLLYIITEPVVNPPNKGRCRVKQLQNVNPLNLRITNEHVPTEPPVAKTPNEYSREEDDESYEDETTTQSQTHHQTRTEHTQHHQGPVHVYERDEDKIRQNTGNWQYVEDKKKKGDYEYIPDDQEYDGDDFEDDDEDFDRAGSKRVKRAPVPKKKKKEGSRSGEPRSDKARFSDLREAVKLSKEAGGVVDYKGPLSRASVDCNGLRCTHIECDIYDLKEDEFVLVEIFSRLYTNTLVDERNPGGDISSLALARVTSTKYNWPHKPTLITAVSTNMNAIASEEGRDLPWWLYLLAILIGLAILILLILLLWRCGFFKRNRPPTEHAELRAEKQPAAHYADTQSRYAPQDQYSQGRHGQML</sequence>
<gene>
    <name evidence="8" type="primary">pat-2</name>
    <name type="ORF">CBG06891</name>
</gene>
<protein>
    <recommendedName>
        <fullName evidence="2">Integrin alpha pat-2</fullName>
    </recommendedName>
    <alternativeName>
        <fullName>Paralyzed arrest at two-fold protein 2</fullName>
    </alternativeName>
</protein>
<proteinExistence type="inferred from homology"/>
<keyword id="KW-0130">Cell adhesion</keyword>
<keyword id="KW-0325">Glycoprotein</keyword>
<keyword id="KW-0401">Integrin</keyword>
<keyword id="KW-0472">Membrane</keyword>
<keyword id="KW-0675">Receptor</keyword>
<keyword id="KW-1185">Reference proteome</keyword>
<keyword id="KW-0677">Repeat</keyword>
<keyword id="KW-0732">Signal</keyword>
<keyword id="KW-0812">Transmembrane</keyword>
<keyword id="KW-1133">Transmembrane helix</keyword>
<feature type="signal peptide" evidence="5">
    <location>
        <begin position="1"/>
        <end position="27"/>
    </location>
</feature>
<feature type="chain" id="PRO_0000370206" description="Integrin alpha pat-2" evidence="5">
    <location>
        <begin position="28"/>
        <end position="1224"/>
    </location>
</feature>
<feature type="topological domain" description="Extracellular" evidence="5">
    <location>
        <begin position="28"/>
        <end position="1153"/>
    </location>
</feature>
<feature type="transmembrane region" description="Helical" evidence="5">
    <location>
        <begin position="1154"/>
        <end position="1174"/>
    </location>
</feature>
<feature type="topological domain" description="Cytoplasmic" evidence="5">
    <location>
        <begin position="1175"/>
        <end position="1224"/>
    </location>
</feature>
<feature type="repeat" description="FG-GAP 1" evidence="6">
    <location>
        <begin position="29"/>
        <end position="96"/>
    </location>
</feature>
<feature type="repeat" description="FG-GAP 2" evidence="6">
    <location>
        <begin position="110"/>
        <end position="173"/>
    </location>
</feature>
<feature type="repeat" description="FG-GAP 3" evidence="6">
    <location>
        <begin position="180"/>
        <end position="235"/>
    </location>
</feature>
<feature type="repeat" description="FG-GAP 4" evidence="6">
    <location>
        <begin position="236"/>
        <end position="292"/>
    </location>
</feature>
<feature type="repeat" description="FG-GAP 5" evidence="6">
    <location>
        <begin position="293"/>
        <end position="347"/>
    </location>
</feature>
<feature type="repeat" description="FG-GAP 6" evidence="6">
    <location>
        <begin position="364"/>
        <end position="423"/>
    </location>
</feature>
<feature type="repeat" description="FG-GAP 7" evidence="6">
    <location>
        <begin position="427"/>
        <end position="490"/>
    </location>
</feature>
<feature type="region of interest" description="Disordered" evidence="7">
    <location>
        <begin position="898"/>
        <end position="968"/>
    </location>
</feature>
<feature type="region of interest" description="Disordered" evidence="7">
    <location>
        <begin position="981"/>
        <end position="1037"/>
    </location>
</feature>
<feature type="region of interest" description="Disordered" evidence="7">
    <location>
        <begin position="1190"/>
        <end position="1224"/>
    </location>
</feature>
<feature type="short sequence motif" description="Cell attachment site" evidence="5">
    <location>
        <begin position="622"/>
        <end position="624"/>
    </location>
</feature>
<feature type="compositionally biased region" description="Acidic residues" evidence="7">
    <location>
        <begin position="920"/>
        <end position="931"/>
    </location>
</feature>
<feature type="compositionally biased region" description="Basic and acidic residues" evidence="7">
    <location>
        <begin position="955"/>
        <end position="964"/>
    </location>
</feature>
<feature type="compositionally biased region" description="Acidic residues" evidence="7">
    <location>
        <begin position="984"/>
        <end position="1003"/>
    </location>
</feature>
<feature type="compositionally biased region" description="Basic residues" evidence="7">
    <location>
        <begin position="1008"/>
        <end position="1023"/>
    </location>
</feature>
<feature type="compositionally biased region" description="Basic and acidic residues" evidence="7">
    <location>
        <begin position="1024"/>
        <end position="1037"/>
    </location>
</feature>
<feature type="compositionally biased region" description="Polar residues" evidence="7">
    <location>
        <begin position="1204"/>
        <end position="1224"/>
    </location>
</feature>
<feature type="glycosylation site" description="N-linked (GlcNAc...) asparagine" evidence="5">
    <location>
        <position position="74"/>
    </location>
</feature>
<feature type="glycosylation site" description="N-linked (GlcNAc...) asparagine" evidence="5">
    <location>
        <position position="110"/>
    </location>
</feature>
<feature type="glycosylation site" description="N-linked (GlcNAc...) asparagine" evidence="5">
    <location>
        <position position="230"/>
    </location>
</feature>
<feature type="glycosylation site" description="N-linked (GlcNAc...) asparagine" evidence="5">
    <location>
        <position position="292"/>
    </location>
</feature>
<feature type="glycosylation site" description="N-linked (GlcNAc...) asparagine" evidence="5">
    <location>
        <position position="610"/>
    </location>
</feature>
<feature type="glycosylation site" description="N-linked (GlcNAc...) asparagine" evidence="5">
    <location>
        <position position="681"/>
    </location>
</feature>
<feature type="glycosylation site" description="N-linked (GlcNAc...) asparagine" evidence="5">
    <location>
        <position position="775"/>
    </location>
</feature>
<feature type="glycosylation site" description="N-linked (GlcNAc...) asparagine" evidence="5">
    <location>
        <position position="819"/>
    </location>
</feature>
<organism>
    <name type="scientific">Caenorhabditis briggsae</name>
    <dbReference type="NCBI Taxonomy" id="6238"/>
    <lineage>
        <taxon>Eukaryota</taxon>
        <taxon>Metazoa</taxon>
        <taxon>Ecdysozoa</taxon>
        <taxon>Nematoda</taxon>
        <taxon>Chromadorea</taxon>
        <taxon>Rhabditida</taxon>
        <taxon>Rhabditina</taxon>
        <taxon>Rhabditomorpha</taxon>
        <taxon>Rhabditoidea</taxon>
        <taxon>Rhabditidae</taxon>
        <taxon>Peloderinae</taxon>
        <taxon>Caenorhabditis</taxon>
    </lineage>
</organism>
<dbReference type="EMBL" id="HE601347">
    <property type="protein sequence ID" value="CAP27117.2"/>
    <property type="molecule type" value="Genomic_DNA"/>
</dbReference>
<dbReference type="SMR" id="A8X3A7"/>
<dbReference type="FunCoup" id="A8X3A7">
    <property type="interactions" value="1142"/>
</dbReference>
<dbReference type="STRING" id="6238.A8X3A7"/>
<dbReference type="GlyCosmos" id="A8X3A7">
    <property type="glycosylation" value="8 sites, No reported glycans"/>
</dbReference>
<dbReference type="EnsemblMetazoa" id="CBG06891.1">
    <property type="protein sequence ID" value="CBG06891.1"/>
    <property type="gene ID" value="WBGene00029084"/>
</dbReference>
<dbReference type="WormBase" id="CBG06891">
    <property type="protein sequence ID" value="CBP34898"/>
    <property type="gene ID" value="WBGene00029084"/>
    <property type="gene designation" value="Cbr-pat-2"/>
</dbReference>
<dbReference type="eggNOG" id="KOG3637">
    <property type="taxonomic scope" value="Eukaryota"/>
</dbReference>
<dbReference type="HOGENOM" id="CLU_004111_4_2_1"/>
<dbReference type="InParanoid" id="A8X3A7"/>
<dbReference type="OMA" id="QVPCMLL"/>
<dbReference type="OrthoDB" id="5317514at2759"/>
<dbReference type="Proteomes" id="UP000008549">
    <property type="component" value="Unassembled WGS sequence"/>
</dbReference>
<dbReference type="GO" id="GO:0009897">
    <property type="term" value="C:external side of plasma membrane"/>
    <property type="evidence" value="ECO:0000318"/>
    <property type="project" value="GO_Central"/>
</dbReference>
<dbReference type="GO" id="GO:0008305">
    <property type="term" value="C:integrin complex"/>
    <property type="evidence" value="ECO:0000318"/>
    <property type="project" value="GO_Central"/>
</dbReference>
<dbReference type="GO" id="GO:0031430">
    <property type="term" value="C:M band"/>
    <property type="evidence" value="ECO:0007669"/>
    <property type="project" value="EnsemblMetazoa"/>
</dbReference>
<dbReference type="GO" id="GO:0055120">
    <property type="term" value="C:striated muscle dense body"/>
    <property type="evidence" value="ECO:0007669"/>
    <property type="project" value="EnsemblMetazoa"/>
</dbReference>
<dbReference type="GO" id="GO:0005178">
    <property type="term" value="F:integrin binding"/>
    <property type="evidence" value="ECO:0000318"/>
    <property type="project" value="GO_Central"/>
</dbReference>
<dbReference type="GO" id="GO:0004888">
    <property type="term" value="F:transmembrane signaling receptor activity"/>
    <property type="evidence" value="ECO:0007669"/>
    <property type="project" value="EnsemblMetazoa"/>
</dbReference>
<dbReference type="GO" id="GO:0033627">
    <property type="term" value="P:cell adhesion mediated by integrin"/>
    <property type="evidence" value="ECO:0000318"/>
    <property type="project" value="GO_Central"/>
</dbReference>
<dbReference type="GO" id="GO:0098609">
    <property type="term" value="P:cell-cell adhesion"/>
    <property type="evidence" value="ECO:0000318"/>
    <property type="project" value="GO_Central"/>
</dbReference>
<dbReference type="GO" id="GO:0007229">
    <property type="term" value="P:integrin-mediated signaling pathway"/>
    <property type="evidence" value="ECO:0000318"/>
    <property type="project" value="GO_Central"/>
</dbReference>
<dbReference type="GO" id="GO:0007005">
    <property type="term" value="P:mitochondrion organization"/>
    <property type="evidence" value="ECO:0007669"/>
    <property type="project" value="EnsemblMetazoa"/>
</dbReference>
<dbReference type="GO" id="GO:0046716">
    <property type="term" value="P:muscle cell cellular homeostasis"/>
    <property type="evidence" value="ECO:0007669"/>
    <property type="project" value="EnsemblMetazoa"/>
</dbReference>
<dbReference type="GO" id="GO:0042059">
    <property type="term" value="P:negative regulation of epidermal growth factor receptor signaling pathway"/>
    <property type="evidence" value="ECO:0007669"/>
    <property type="project" value="EnsemblMetazoa"/>
</dbReference>
<dbReference type="GO" id="GO:1901076">
    <property type="term" value="P:positive regulation of engulfment of apoptotic cell"/>
    <property type="evidence" value="ECO:0007669"/>
    <property type="project" value="EnsemblMetazoa"/>
</dbReference>
<dbReference type="GO" id="GO:0040017">
    <property type="term" value="P:positive regulation of locomotion"/>
    <property type="evidence" value="ECO:0007669"/>
    <property type="project" value="EnsemblMetazoa"/>
</dbReference>
<dbReference type="GO" id="GO:0060298">
    <property type="term" value="P:positive regulation of sarcomere organization"/>
    <property type="evidence" value="ECO:0007669"/>
    <property type="project" value="EnsemblMetazoa"/>
</dbReference>
<dbReference type="GO" id="GO:1903354">
    <property type="term" value="P:regulation of distal tip cell migration"/>
    <property type="evidence" value="ECO:0007669"/>
    <property type="project" value="EnsemblMetazoa"/>
</dbReference>
<dbReference type="GO" id="GO:0040028">
    <property type="term" value="P:regulation of vulval development"/>
    <property type="evidence" value="ECO:0007669"/>
    <property type="project" value="EnsemblMetazoa"/>
</dbReference>
<dbReference type="GO" id="GO:0072327">
    <property type="term" value="P:vulval cell fate specification"/>
    <property type="evidence" value="ECO:0007669"/>
    <property type="project" value="EnsemblMetazoa"/>
</dbReference>
<dbReference type="FunFam" id="2.130.10.130:FF:000019">
    <property type="entry name" value="Integrin alpha pat-2"/>
    <property type="match status" value="1"/>
</dbReference>
<dbReference type="FunFam" id="2.60.40.1510:FF:000026">
    <property type="entry name" value="Integrin alpha pat-2"/>
    <property type="match status" value="1"/>
</dbReference>
<dbReference type="Gene3D" id="1.20.5.930">
    <property type="entry name" value="Bicelle-embedded integrin alpha(iib) transmembrane segment"/>
    <property type="match status" value="1"/>
</dbReference>
<dbReference type="Gene3D" id="2.130.10.130">
    <property type="entry name" value="Integrin alpha, N-terminal"/>
    <property type="match status" value="1"/>
</dbReference>
<dbReference type="Gene3D" id="2.60.40.1460">
    <property type="entry name" value="Integrin domains. Chain A, domain 2"/>
    <property type="match status" value="1"/>
</dbReference>
<dbReference type="Gene3D" id="2.60.40.1510">
    <property type="entry name" value="ntegrin, alpha v. Chain A, domain 3"/>
    <property type="match status" value="1"/>
</dbReference>
<dbReference type="Gene3D" id="2.60.40.1530">
    <property type="entry name" value="ntegrin, alpha v. Chain A, domain 4"/>
    <property type="match status" value="1"/>
</dbReference>
<dbReference type="InterPro" id="IPR013517">
    <property type="entry name" value="FG-GAP"/>
</dbReference>
<dbReference type="InterPro" id="IPR013519">
    <property type="entry name" value="Int_alpha_beta-p"/>
</dbReference>
<dbReference type="InterPro" id="IPR000413">
    <property type="entry name" value="Integrin_alpha"/>
</dbReference>
<dbReference type="InterPro" id="IPR018184">
    <property type="entry name" value="Integrin_alpha_C_CS"/>
</dbReference>
<dbReference type="InterPro" id="IPR013649">
    <property type="entry name" value="Integrin_alpha_Ig-like_1"/>
</dbReference>
<dbReference type="InterPro" id="IPR048285">
    <property type="entry name" value="Integrin_alpha_Ig-like_2"/>
</dbReference>
<dbReference type="InterPro" id="IPR048286">
    <property type="entry name" value="Integrin_alpha_Ig-like_3"/>
</dbReference>
<dbReference type="InterPro" id="IPR028994">
    <property type="entry name" value="Integrin_alpha_N"/>
</dbReference>
<dbReference type="InterPro" id="IPR032695">
    <property type="entry name" value="Integrin_dom_sf"/>
</dbReference>
<dbReference type="PANTHER" id="PTHR23220">
    <property type="entry name" value="INTEGRIN ALPHA"/>
    <property type="match status" value="1"/>
</dbReference>
<dbReference type="PANTHER" id="PTHR23220:SF133">
    <property type="entry name" value="INTEGRIN ALPHA-PS2"/>
    <property type="match status" value="1"/>
</dbReference>
<dbReference type="Pfam" id="PF01839">
    <property type="entry name" value="FG-GAP"/>
    <property type="match status" value="3"/>
</dbReference>
<dbReference type="Pfam" id="PF08441">
    <property type="entry name" value="Integrin_A_Ig_1"/>
    <property type="match status" value="1"/>
</dbReference>
<dbReference type="Pfam" id="PF20805">
    <property type="entry name" value="Integrin_A_Ig_2"/>
    <property type="match status" value="1"/>
</dbReference>
<dbReference type="Pfam" id="PF20806">
    <property type="entry name" value="Integrin_A_Ig_3"/>
    <property type="match status" value="1"/>
</dbReference>
<dbReference type="Pfam" id="PF00357">
    <property type="entry name" value="Integrin_alpha"/>
    <property type="match status" value="1"/>
</dbReference>
<dbReference type="PRINTS" id="PR01185">
    <property type="entry name" value="INTEGRINA"/>
</dbReference>
<dbReference type="SMART" id="SM00191">
    <property type="entry name" value="Int_alpha"/>
    <property type="match status" value="5"/>
</dbReference>
<dbReference type="SUPFAM" id="SSF69318">
    <property type="entry name" value="Integrin alpha N-terminal domain"/>
    <property type="match status" value="1"/>
</dbReference>
<dbReference type="SUPFAM" id="SSF69179">
    <property type="entry name" value="Integrin domains"/>
    <property type="match status" value="3"/>
</dbReference>
<dbReference type="PROSITE" id="PS51470">
    <property type="entry name" value="FG_GAP"/>
    <property type="match status" value="7"/>
</dbReference>
<dbReference type="PROSITE" id="PS00242">
    <property type="entry name" value="INTEGRIN_ALPHA"/>
    <property type="match status" value="1"/>
</dbReference>